<name>RS19_CLAM3</name>
<reference key="1">
    <citation type="journal article" date="2008" name="J. Bacteriol.">
        <title>The genome sequence of the tomato-pathogenic actinomycete Clavibacter michiganensis subsp. michiganensis NCPPB382 reveals a large island involved in pathogenicity.</title>
        <authorList>
            <person name="Gartemann K.-H."/>
            <person name="Abt B."/>
            <person name="Bekel T."/>
            <person name="Burger A."/>
            <person name="Engemann J."/>
            <person name="Fluegel M."/>
            <person name="Gaigalat L."/>
            <person name="Goesmann A."/>
            <person name="Graefen I."/>
            <person name="Kalinowski J."/>
            <person name="Kaup O."/>
            <person name="Kirchner O."/>
            <person name="Krause L."/>
            <person name="Linke B."/>
            <person name="McHardy A."/>
            <person name="Meyer F."/>
            <person name="Pohle S."/>
            <person name="Rueckert C."/>
            <person name="Schneiker S."/>
            <person name="Zellermann E.-M."/>
            <person name="Puehler A."/>
            <person name="Eichenlaub R."/>
            <person name="Kaiser O."/>
            <person name="Bartels D."/>
        </authorList>
    </citation>
    <scope>NUCLEOTIDE SEQUENCE [LARGE SCALE GENOMIC DNA]</scope>
    <source>
        <strain>NCPPB 382</strain>
    </source>
</reference>
<proteinExistence type="inferred from homology"/>
<gene>
    <name evidence="1" type="primary">rpsS</name>
    <name type="ordered locus">CMM_2613</name>
</gene>
<sequence length="93" mass="10570">MPRSLKKGPFVDDHLLRKVISANEASSKNVIKTWSRRSMIIPAMLGHTIAVHDGRKHVPVFVTESMVGHKLGEFALTRTFRGHVKDDKKGRRR</sequence>
<organism>
    <name type="scientific">Clavibacter michiganensis subsp. michiganensis (strain NCPPB 382)</name>
    <dbReference type="NCBI Taxonomy" id="443906"/>
    <lineage>
        <taxon>Bacteria</taxon>
        <taxon>Bacillati</taxon>
        <taxon>Actinomycetota</taxon>
        <taxon>Actinomycetes</taxon>
        <taxon>Micrococcales</taxon>
        <taxon>Microbacteriaceae</taxon>
        <taxon>Clavibacter</taxon>
    </lineage>
</organism>
<accession>A5CUA9</accession>
<dbReference type="EMBL" id="AM711867">
    <property type="protein sequence ID" value="CAN02696.1"/>
    <property type="molecule type" value="Genomic_DNA"/>
</dbReference>
<dbReference type="RefSeq" id="WP_012039302.1">
    <property type="nucleotide sequence ID" value="NC_009480.1"/>
</dbReference>
<dbReference type="SMR" id="A5CUA9"/>
<dbReference type="GeneID" id="92984325"/>
<dbReference type="KEGG" id="cmi:CMM_2613"/>
<dbReference type="eggNOG" id="COG0185">
    <property type="taxonomic scope" value="Bacteria"/>
</dbReference>
<dbReference type="HOGENOM" id="CLU_144911_0_1_11"/>
<dbReference type="OrthoDB" id="9797833at2"/>
<dbReference type="Proteomes" id="UP000001564">
    <property type="component" value="Chromosome"/>
</dbReference>
<dbReference type="GO" id="GO:0005737">
    <property type="term" value="C:cytoplasm"/>
    <property type="evidence" value="ECO:0007669"/>
    <property type="project" value="UniProtKB-ARBA"/>
</dbReference>
<dbReference type="GO" id="GO:0015935">
    <property type="term" value="C:small ribosomal subunit"/>
    <property type="evidence" value="ECO:0007669"/>
    <property type="project" value="InterPro"/>
</dbReference>
<dbReference type="GO" id="GO:0019843">
    <property type="term" value="F:rRNA binding"/>
    <property type="evidence" value="ECO:0007669"/>
    <property type="project" value="UniProtKB-UniRule"/>
</dbReference>
<dbReference type="GO" id="GO:0003735">
    <property type="term" value="F:structural constituent of ribosome"/>
    <property type="evidence" value="ECO:0007669"/>
    <property type="project" value="InterPro"/>
</dbReference>
<dbReference type="GO" id="GO:0000028">
    <property type="term" value="P:ribosomal small subunit assembly"/>
    <property type="evidence" value="ECO:0007669"/>
    <property type="project" value="TreeGrafter"/>
</dbReference>
<dbReference type="GO" id="GO:0006412">
    <property type="term" value="P:translation"/>
    <property type="evidence" value="ECO:0007669"/>
    <property type="project" value="UniProtKB-UniRule"/>
</dbReference>
<dbReference type="FunFam" id="3.30.860.10:FF:000001">
    <property type="entry name" value="30S ribosomal protein S19"/>
    <property type="match status" value="1"/>
</dbReference>
<dbReference type="Gene3D" id="3.30.860.10">
    <property type="entry name" value="30s Ribosomal Protein S19, Chain A"/>
    <property type="match status" value="1"/>
</dbReference>
<dbReference type="HAMAP" id="MF_00531">
    <property type="entry name" value="Ribosomal_uS19"/>
    <property type="match status" value="1"/>
</dbReference>
<dbReference type="InterPro" id="IPR002222">
    <property type="entry name" value="Ribosomal_uS19"/>
</dbReference>
<dbReference type="InterPro" id="IPR005732">
    <property type="entry name" value="Ribosomal_uS19_bac-type"/>
</dbReference>
<dbReference type="InterPro" id="IPR020934">
    <property type="entry name" value="Ribosomal_uS19_CS"/>
</dbReference>
<dbReference type="InterPro" id="IPR023575">
    <property type="entry name" value="Ribosomal_uS19_SF"/>
</dbReference>
<dbReference type="NCBIfam" id="TIGR01050">
    <property type="entry name" value="rpsS_bact"/>
    <property type="match status" value="1"/>
</dbReference>
<dbReference type="PANTHER" id="PTHR11880">
    <property type="entry name" value="RIBOSOMAL PROTEIN S19P FAMILY MEMBER"/>
    <property type="match status" value="1"/>
</dbReference>
<dbReference type="PANTHER" id="PTHR11880:SF8">
    <property type="entry name" value="SMALL RIBOSOMAL SUBUNIT PROTEIN US19M"/>
    <property type="match status" value="1"/>
</dbReference>
<dbReference type="Pfam" id="PF00203">
    <property type="entry name" value="Ribosomal_S19"/>
    <property type="match status" value="1"/>
</dbReference>
<dbReference type="PIRSF" id="PIRSF002144">
    <property type="entry name" value="Ribosomal_S19"/>
    <property type="match status" value="1"/>
</dbReference>
<dbReference type="PRINTS" id="PR00975">
    <property type="entry name" value="RIBOSOMALS19"/>
</dbReference>
<dbReference type="SUPFAM" id="SSF54570">
    <property type="entry name" value="Ribosomal protein S19"/>
    <property type="match status" value="1"/>
</dbReference>
<dbReference type="PROSITE" id="PS00323">
    <property type="entry name" value="RIBOSOMAL_S19"/>
    <property type="match status" value="1"/>
</dbReference>
<evidence type="ECO:0000255" key="1">
    <source>
        <dbReference type="HAMAP-Rule" id="MF_00531"/>
    </source>
</evidence>
<evidence type="ECO:0000305" key="2"/>
<feature type="chain" id="PRO_1000051036" description="Small ribosomal subunit protein uS19">
    <location>
        <begin position="1"/>
        <end position="93"/>
    </location>
</feature>
<protein>
    <recommendedName>
        <fullName evidence="1">Small ribosomal subunit protein uS19</fullName>
    </recommendedName>
    <alternativeName>
        <fullName evidence="2">30S ribosomal protein S19</fullName>
    </alternativeName>
</protein>
<keyword id="KW-0687">Ribonucleoprotein</keyword>
<keyword id="KW-0689">Ribosomal protein</keyword>
<keyword id="KW-0694">RNA-binding</keyword>
<keyword id="KW-0699">rRNA-binding</keyword>
<comment type="function">
    <text evidence="1">Protein S19 forms a complex with S13 that binds strongly to the 16S ribosomal RNA.</text>
</comment>
<comment type="similarity">
    <text evidence="1">Belongs to the universal ribosomal protein uS19 family.</text>
</comment>